<name>CITD2_SALPA</name>
<sequence length="97" mass="10472">MKIIKDALAGTLESSDVMIRIGPSSEPGIRLELESLVKQQFGAAIEQVVRETLAKLGVERALVSVDDKGALECILRARVQAAALRAAEQTEIQWSAL</sequence>
<dbReference type="EMBL" id="CP000026">
    <property type="protein sequence ID" value="AAV76095.1"/>
    <property type="molecule type" value="Genomic_DNA"/>
</dbReference>
<dbReference type="SMR" id="Q5PKJ6"/>
<dbReference type="KEGG" id="spt:SPA0060"/>
<dbReference type="HOGENOM" id="CLU_158489_0_0_6"/>
<dbReference type="Proteomes" id="UP000008185">
    <property type="component" value="Chromosome"/>
</dbReference>
<dbReference type="GO" id="GO:0005737">
    <property type="term" value="C:cytoplasm"/>
    <property type="evidence" value="ECO:0007669"/>
    <property type="project" value="UniProtKB-SubCell"/>
</dbReference>
<dbReference type="HAMAP" id="MF_00805">
    <property type="entry name" value="CitD"/>
    <property type="match status" value="1"/>
</dbReference>
<dbReference type="InterPro" id="IPR006495">
    <property type="entry name" value="CitD"/>
</dbReference>
<dbReference type="InterPro" id="IPR023439">
    <property type="entry name" value="Mal_deCO2ase/Cit_lyase_ACP"/>
</dbReference>
<dbReference type="NCBIfam" id="TIGR01608">
    <property type="entry name" value="citD"/>
    <property type="match status" value="1"/>
</dbReference>
<dbReference type="NCBIfam" id="NF009726">
    <property type="entry name" value="PRK13253.1"/>
    <property type="match status" value="1"/>
</dbReference>
<dbReference type="Pfam" id="PF06857">
    <property type="entry name" value="ACP"/>
    <property type="match status" value="1"/>
</dbReference>
<dbReference type="PIRSF" id="PIRSF002736">
    <property type="entry name" value="Citrt_lyas_gamma"/>
    <property type="match status" value="1"/>
</dbReference>
<gene>
    <name evidence="1" type="primary">citD2</name>
    <name type="ordered locus">SPA0060</name>
</gene>
<evidence type="ECO:0000255" key="1">
    <source>
        <dbReference type="HAMAP-Rule" id="MF_00805"/>
    </source>
</evidence>
<feature type="chain" id="PRO_0000214706" description="Citrate lyase acyl carrier protein 2">
    <location>
        <begin position="1"/>
        <end position="97"/>
    </location>
</feature>
<feature type="modified residue" description="O-(phosphoribosyl dephospho-coenzyme A)serine" evidence="1">
    <location>
        <position position="14"/>
    </location>
</feature>
<keyword id="KW-0963">Cytoplasm</keyword>
<keyword id="KW-0597">Phosphoprotein</keyword>
<comment type="function">
    <text evidence="1">Covalent carrier of the coenzyme of citrate lyase.</text>
</comment>
<comment type="subunit">
    <text evidence="1">Oligomer with a subunit composition of (alpha,beta,gamma)6.</text>
</comment>
<comment type="subcellular location">
    <subcellularLocation>
        <location evidence="1">Cytoplasm</location>
    </subcellularLocation>
</comment>
<comment type="similarity">
    <text evidence="1">Belongs to the CitD family.</text>
</comment>
<proteinExistence type="inferred from homology"/>
<organism>
    <name type="scientific">Salmonella paratyphi A (strain ATCC 9150 / SARB42)</name>
    <dbReference type="NCBI Taxonomy" id="295319"/>
    <lineage>
        <taxon>Bacteria</taxon>
        <taxon>Pseudomonadati</taxon>
        <taxon>Pseudomonadota</taxon>
        <taxon>Gammaproteobacteria</taxon>
        <taxon>Enterobacterales</taxon>
        <taxon>Enterobacteriaceae</taxon>
        <taxon>Salmonella</taxon>
    </lineage>
</organism>
<reference key="1">
    <citation type="journal article" date="2004" name="Nat. Genet.">
        <title>Comparison of genome degradation in Paratyphi A and Typhi, human-restricted serovars of Salmonella enterica that cause typhoid.</title>
        <authorList>
            <person name="McClelland M."/>
            <person name="Sanderson K.E."/>
            <person name="Clifton S.W."/>
            <person name="Latreille P."/>
            <person name="Porwollik S."/>
            <person name="Sabo A."/>
            <person name="Meyer R."/>
            <person name="Bieri T."/>
            <person name="Ozersky P."/>
            <person name="McLellan M."/>
            <person name="Harkins C.R."/>
            <person name="Wang C."/>
            <person name="Nguyen C."/>
            <person name="Berghoff A."/>
            <person name="Elliott G."/>
            <person name="Kohlberg S."/>
            <person name="Strong C."/>
            <person name="Du F."/>
            <person name="Carter J."/>
            <person name="Kremizki C."/>
            <person name="Layman D."/>
            <person name="Leonard S."/>
            <person name="Sun H."/>
            <person name="Fulton L."/>
            <person name="Nash W."/>
            <person name="Miner T."/>
            <person name="Minx P."/>
            <person name="Delehaunty K."/>
            <person name="Fronick C."/>
            <person name="Magrini V."/>
            <person name="Nhan M."/>
            <person name="Warren W."/>
            <person name="Florea L."/>
            <person name="Spieth J."/>
            <person name="Wilson R.K."/>
        </authorList>
    </citation>
    <scope>NUCLEOTIDE SEQUENCE [LARGE SCALE GENOMIC DNA]</scope>
    <source>
        <strain>ATCC 9150 / SARB42</strain>
    </source>
</reference>
<protein>
    <recommendedName>
        <fullName evidence="1">Citrate lyase acyl carrier protein 2</fullName>
    </recommendedName>
    <alternativeName>
        <fullName evidence="1">Citrate lyase gamma chain 2</fullName>
    </alternativeName>
</protein>
<accession>Q5PKJ6</accession>